<name>RADA_CHLMU</name>
<accession>Q9PK96</accession>
<gene>
    <name evidence="1" type="primary">radA</name>
    <name type="ordered locus">TC_0571</name>
</gene>
<proteinExistence type="inferred from homology"/>
<keyword id="KW-0067">ATP-binding</keyword>
<keyword id="KW-0227">DNA damage</keyword>
<keyword id="KW-0234">DNA repair</keyword>
<keyword id="KW-0238">DNA-binding</keyword>
<keyword id="KW-0378">Hydrolase</keyword>
<keyword id="KW-0479">Metal-binding</keyword>
<keyword id="KW-0547">Nucleotide-binding</keyword>
<keyword id="KW-0346">Stress response</keyword>
<keyword id="KW-0862">Zinc</keyword>
<keyword id="KW-0863">Zinc-finger</keyword>
<sequence length="455" mass="49951">MTTTKIKTQWACSECGSYSPKWLGQCPGCFQWNTLVEEIHSSKLKTSSYPLSSTTPVPLNTVKFQEEIRISTRSKGWNRLLGGGTVCGSLTLLGGEPGIGKSTLLLQISSQFAEQGYKVLYVCGEESVSQTSLRAQRLQISSSNIFLFPETNLEDIKQQISDLAPDILIIDSIQIIFSPSLSSAPGSVAQVRETTAELMHIAKQKQITTFIIGHVTKSGEIAGPRILEHLVDTVLYFEGNAHTNYRMIRSVKNRFGPTNELLILSMQTDGLHEVENPSGFFLQEKVVETTGSTIIPIVEGSETLLVEVQALVSSSPFSNPVRKTSGFDPNRFSLLLAVLEKRANVKLYTSDVFLSIAGGLKITQPSADLGAVLSVVSSLYNRYLPKNYTYTGEIGLGGEIRHVTHIEHRIKESIIMGFKGIVMPSGQIKGLPKEYLDQIDIIGVKTIKDAVRLLQ</sequence>
<dbReference type="EC" id="3.6.4.-" evidence="1"/>
<dbReference type="EMBL" id="AE002160">
    <property type="protein sequence ID" value="AAF39407.1"/>
    <property type="status" value="ALT_INIT"/>
    <property type="molecule type" value="Genomic_DNA"/>
</dbReference>
<dbReference type="PIR" id="D81688">
    <property type="entry name" value="D81688"/>
</dbReference>
<dbReference type="RefSeq" id="WP_010230867.1">
    <property type="nucleotide sequence ID" value="NZ_CP063055.1"/>
</dbReference>
<dbReference type="SMR" id="Q9PK96"/>
<dbReference type="MEROPS" id="S16.A04"/>
<dbReference type="GeneID" id="1245930"/>
<dbReference type="KEGG" id="cmu:TC_0571"/>
<dbReference type="eggNOG" id="COG1066">
    <property type="taxonomic scope" value="Bacteria"/>
</dbReference>
<dbReference type="HOGENOM" id="CLU_018264_0_1_0"/>
<dbReference type="OrthoDB" id="9803906at2"/>
<dbReference type="Proteomes" id="UP000000800">
    <property type="component" value="Chromosome"/>
</dbReference>
<dbReference type="GO" id="GO:0005829">
    <property type="term" value="C:cytosol"/>
    <property type="evidence" value="ECO:0007669"/>
    <property type="project" value="TreeGrafter"/>
</dbReference>
<dbReference type="GO" id="GO:0005524">
    <property type="term" value="F:ATP binding"/>
    <property type="evidence" value="ECO:0007669"/>
    <property type="project" value="UniProtKB-UniRule"/>
</dbReference>
<dbReference type="GO" id="GO:0016887">
    <property type="term" value="F:ATP hydrolysis activity"/>
    <property type="evidence" value="ECO:0007669"/>
    <property type="project" value="InterPro"/>
</dbReference>
<dbReference type="GO" id="GO:0140664">
    <property type="term" value="F:ATP-dependent DNA damage sensor activity"/>
    <property type="evidence" value="ECO:0007669"/>
    <property type="project" value="InterPro"/>
</dbReference>
<dbReference type="GO" id="GO:0004176">
    <property type="term" value="F:ATP-dependent peptidase activity"/>
    <property type="evidence" value="ECO:0007669"/>
    <property type="project" value="InterPro"/>
</dbReference>
<dbReference type="GO" id="GO:0003684">
    <property type="term" value="F:damaged DNA binding"/>
    <property type="evidence" value="ECO:0007669"/>
    <property type="project" value="InterPro"/>
</dbReference>
<dbReference type="GO" id="GO:0004252">
    <property type="term" value="F:serine-type endopeptidase activity"/>
    <property type="evidence" value="ECO:0007669"/>
    <property type="project" value="InterPro"/>
</dbReference>
<dbReference type="GO" id="GO:0008270">
    <property type="term" value="F:zinc ion binding"/>
    <property type="evidence" value="ECO:0007669"/>
    <property type="project" value="UniProtKB-KW"/>
</dbReference>
<dbReference type="GO" id="GO:0006508">
    <property type="term" value="P:proteolysis"/>
    <property type="evidence" value="ECO:0007669"/>
    <property type="project" value="InterPro"/>
</dbReference>
<dbReference type="GO" id="GO:0000725">
    <property type="term" value="P:recombinational repair"/>
    <property type="evidence" value="ECO:0007669"/>
    <property type="project" value="UniProtKB-UniRule"/>
</dbReference>
<dbReference type="CDD" id="cd01121">
    <property type="entry name" value="RadA_SMS_N"/>
    <property type="match status" value="1"/>
</dbReference>
<dbReference type="FunFam" id="3.30.230.10:FF:000163">
    <property type="entry name" value="DNA repair protein RadA"/>
    <property type="match status" value="1"/>
</dbReference>
<dbReference type="FunFam" id="3.40.50.300:FF:000050">
    <property type="entry name" value="DNA repair protein RadA"/>
    <property type="match status" value="1"/>
</dbReference>
<dbReference type="Gene3D" id="3.30.230.10">
    <property type="match status" value="1"/>
</dbReference>
<dbReference type="Gene3D" id="3.40.50.300">
    <property type="entry name" value="P-loop containing nucleotide triphosphate hydrolases"/>
    <property type="match status" value="1"/>
</dbReference>
<dbReference type="HAMAP" id="MF_01498">
    <property type="entry name" value="RadA_bact"/>
    <property type="match status" value="1"/>
</dbReference>
<dbReference type="InterPro" id="IPR003593">
    <property type="entry name" value="AAA+_ATPase"/>
</dbReference>
<dbReference type="InterPro" id="IPR004504">
    <property type="entry name" value="DNA_repair_RadA"/>
</dbReference>
<dbReference type="InterPro" id="IPR008269">
    <property type="entry name" value="Lon_proteolytic"/>
</dbReference>
<dbReference type="InterPro" id="IPR027417">
    <property type="entry name" value="P-loop_NTPase"/>
</dbReference>
<dbReference type="InterPro" id="IPR020588">
    <property type="entry name" value="RecA_ATP-bd"/>
</dbReference>
<dbReference type="InterPro" id="IPR020568">
    <property type="entry name" value="Ribosomal_Su5_D2-typ_SF"/>
</dbReference>
<dbReference type="InterPro" id="IPR014721">
    <property type="entry name" value="Ribsml_uS5_D2-typ_fold_subgr"/>
</dbReference>
<dbReference type="InterPro" id="IPR041166">
    <property type="entry name" value="Rubredoxin_2"/>
</dbReference>
<dbReference type="NCBIfam" id="TIGR00416">
    <property type="entry name" value="sms"/>
    <property type="match status" value="1"/>
</dbReference>
<dbReference type="PANTHER" id="PTHR32472">
    <property type="entry name" value="DNA REPAIR PROTEIN RADA"/>
    <property type="match status" value="1"/>
</dbReference>
<dbReference type="PANTHER" id="PTHR32472:SF10">
    <property type="entry name" value="DNA REPAIR PROTEIN RADA-LIKE PROTEIN"/>
    <property type="match status" value="1"/>
</dbReference>
<dbReference type="Pfam" id="PF13481">
    <property type="entry name" value="AAA_25"/>
    <property type="match status" value="1"/>
</dbReference>
<dbReference type="Pfam" id="PF05362">
    <property type="entry name" value="Lon_C"/>
    <property type="match status" value="1"/>
</dbReference>
<dbReference type="Pfam" id="PF18073">
    <property type="entry name" value="Zn_ribbon_LapB"/>
    <property type="match status" value="1"/>
</dbReference>
<dbReference type="PRINTS" id="PR01874">
    <property type="entry name" value="DNAREPAIRADA"/>
</dbReference>
<dbReference type="SMART" id="SM00382">
    <property type="entry name" value="AAA"/>
    <property type="match status" value="1"/>
</dbReference>
<dbReference type="SUPFAM" id="SSF52540">
    <property type="entry name" value="P-loop containing nucleoside triphosphate hydrolases"/>
    <property type="match status" value="1"/>
</dbReference>
<dbReference type="SUPFAM" id="SSF54211">
    <property type="entry name" value="Ribosomal protein S5 domain 2-like"/>
    <property type="match status" value="1"/>
</dbReference>
<dbReference type="PROSITE" id="PS50162">
    <property type="entry name" value="RECA_2"/>
    <property type="match status" value="1"/>
</dbReference>
<protein>
    <recommendedName>
        <fullName evidence="1">DNA repair protein RadA</fullName>
        <ecNumber evidence="1">3.6.4.-</ecNumber>
    </recommendedName>
    <alternativeName>
        <fullName evidence="1">Branch migration protein RadA</fullName>
    </alternativeName>
</protein>
<feature type="chain" id="PRO_0000187923" description="DNA repair protein RadA">
    <location>
        <begin position="1"/>
        <end position="455"/>
    </location>
</feature>
<feature type="zinc finger region" description="C4-type" evidence="1">
    <location>
        <begin position="12"/>
        <end position="29"/>
    </location>
</feature>
<feature type="region of interest" description="Lon-protease-like" evidence="1">
    <location>
        <begin position="351"/>
        <end position="455"/>
    </location>
</feature>
<feature type="short sequence motif" description="RadA KNRFG motif" evidence="1">
    <location>
        <begin position="252"/>
        <end position="256"/>
    </location>
</feature>
<feature type="binding site" evidence="1">
    <location>
        <begin position="95"/>
        <end position="102"/>
    </location>
    <ligand>
        <name>ATP</name>
        <dbReference type="ChEBI" id="CHEBI:30616"/>
    </ligand>
</feature>
<comment type="function">
    <text evidence="1">DNA-dependent ATPase involved in processing of recombination intermediates, plays a role in repairing DNA breaks. Stimulates the branch migration of RecA-mediated strand transfer reactions, allowing the 3' invading strand to extend heteroduplex DNA faster. Binds ssDNA in the presence of ADP but not other nucleotides, has ATPase activity that is stimulated by ssDNA and various branched DNA structures, but inhibited by SSB. Does not have RecA's homology-searching function.</text>
</comment>
<comment type="domain">
    <text evidence="1">Has a putative N-terminal zinc-finger, a middle region with homology to RecA with ATPase motifs including the RadA KNRFG motif, while the C-terminus is homologous to Lon protease.</text>
</comment>
<comment type="similarity">
    <text evidence="1">Belongs to the RecA family. RadA subfamily.</text>
</comment>
<comment type="sequence caution" evidence="2">
    <conflict type="erroneous initiation">
        <sequence resource="EMBL-CDS" id="AAF39407"/>
    </conflict>
    <text>Extended N-terminus.</text>
</comment>
<organism>
    <name type="scientific">Chlamydia muridarum (strain MoPn / Nigg)</name>
    <dbReference type="NCBI Taxonomy" id="243161"/>
    <lineage>
        <taxon>Bacteria</taxon>
        <taxon>Pseudomonadati</taxon>
        <taxon>Chlamydiota</taxon>
        <taxon>Chlamydiia</taxon>
        <taxon>Chlamydiales</taxon>
        <taxon>Chlamydiaceae</taxon>
        <taxon>Chlamydia/Chlamydophila group</taxon>
        <taxon>Chlamydia</taxon>
    </lineage>
</organism>
<reference key="1">
    <citation type="journal article" date="2000" name="Nucleic Acids Res.">
        <title>Genome sequences of Chlamydia trachomatis MoPn and Chlamydia pneumoniae AR39.</title>
        <authorList>
            <person name="Read T.D."/>
            <person name="Brunham R.C."/>
            <person name="Shen C."/>
            <person name="Gill S.R."/>
            <person name="Heidelberg J.F."/>
            <person name="White O."/>
            <person name="Hickey E.K."/>
            <person name="Peterson J.D."/>
            <person name="Utterback T.R."/>
            <person name="Berry K.J."/>
            <person name="Bass S."/>
            <person name="Linher K.D."/>
            <person name="Weidman J.F."/>
            <person name="Khouri H.M."/>
            <person name="Craven B."/>
            <person name="Bowman C."/>
            <person name="Dodson R.J."/>
            <person name="Gwinn M.L."/>
            <person name="Nelson W.C."/>
            <person name="DeBoy R.T."/>
            <person name="Kolonay J.F."/>
            <person name="McClarty G."/>
            <person name="Salzberg S.L."/>
            <person name="Eisen J.A."/>
            <person name="Fraser C.M."/>
        </authorList>
    </citation>
    <scope>NUCLEOTIDE SEQUENCE [LARGE SCALE GENOMIC DNA]</scope>
    <source>
        <strain>MoPn / Nigg</strain>
    </source>
</reference>
<evidence type="ECO:0000255" key="1">
    <source>
        <dbReference type="HAMAP-Rule" id="MF_01498"/>
    </source>
</evidence>
<evidence type="ECO:0000305" key="2"/>